<proteinExistence type="evidence at protein level"/>
<keyword id="KW-0002">3D-structure</keyword>
<keyword id="KW-0012">Acyltransferase</keyword>
<keyword id="KW-0028">Amino-acid biosynthesis</keyword>
<keyword id="KW-0963">Cytoplasm</keyword>
<keyword id="KW-0220">Diaminopimelate biosynthesis</keyword>
<keyword id="KW-0457">Lysine biosynthesis</keyword>
<keyword id="KW-1185">Reference proteome</keyword>
<keyword id="KW-0677">Repeat</keyword>
<keyword id="KW-0808">Transferase</keyword>
<gene>
    <name evidence="1" type="primary">dapD</name>
    <name type="ordered locus">lpg0888</name>
</gene>
<sequence length="276" mass="30078">MNSLQDLIEQAFENRQNLSLDTASSDLINAINEVLSGLDNGQFRVAEKINGEWTVHQWLKKAVLLSFKLFPNQIIDAGFCKFYDKIPLKYTDCSNEQFQQSGVRVVPHAMVRRGAYIAKNTVLMPSYVNIGAYIDEGVMVDTWATVGSCAQIGKNVHISGGAGIGGVLEPLQANPTIIEDNCFIGARSEIVEGVIVEKNSVISMGVFLGQSTKIYNRITGEVSYGRIPAGSVVVAGNLPSHDGSHSLYCAVIVKQVDEKTRAKVSINDLLRANQDD</sequence>
<comment type="catalytic activity">
    <reaction evidence="1">
        <text>(S)-2,3,4,5-tetrahydrodipicolinate + succinyl-CoA + H2O = (S)-2-succinylamino-6-oxoheptanedioate + CoA</text>
        <dbReference type="Rhea" id="RHEA:17325"/>
        <dbReference type="ChEBI" id="CHEBI:15377"/>
        <dbReference type="ChEBI" id="CHEBI:15685"/>
        <dbReference type="ChEBI" id="CHEBI:16845"/>
        <dbReference type="ChEBI" id="CHEBI:57287"/>
        <dbReference type="ChEBI" id="CHEBI:57292"/>
        <dbReference type="EC" id="2.3.1.117"/>
    </reaction>
</comment>
<comment type="pathway">
    <text evidence="1">Amino-acid biosynthesis; L-lysine biosynthesis via DAP pathway; LL-2,6-diaminopimelate from (S)-tetrahydrodipicolinate (succinylase route): step 1/3.</text>
</comment>
<comment type="subunit">
    <text evidence="1">Homotrimer.</text>
</comment>
<comment type="subcellular location">
    <subcellularLocation>
        <location evidence="1">Cytoplasm</location>
    </subcellularLocation>
</comment>
<comment type="similarity">
    <text evidence="1">Belongs to the transferase hexapeptide repeat family.</text>
</comment>
<name>DAPD_LEGPH</name>
<accession>Q5ZX45</accession>
<evidence type="ECO:0000255" key="1">
    <source>
        <dbReference type="HAMAP-Rule" id="MF_00811"/>
    </source>
</evidence>
<evidence type="ECO:0007829" key="2">
    <source>
        <dbReference type="PDB" id="6CKT"/>
    </source>
</evidence>
<reference key="1">
    <citation type="journal article" date="2004" name="Science">
        <title>The genomic sequence of the accidental pathogen Legionella pneumophila.</title>
        <authorList>
            <person name="Chien M."/>
            <person name="Morozova I."/>
            <person name="Shi S."/>
            <person name="Sheng H."/>
            <person name="Chen J."/>
            <person name="Gomez S.M."/>
            <person name="Asamani G."/>
            <person name="Hill K."/>
            <person name="Nuara J."/>
            <person name="Feder M."/>
            <person name="Rineer J."/>
            <person name="Greenberg J.J."/>
            <person name="Steshenko V."/>
            <person name="Park S.H."/>
            <person name="Zhao B."/>
            <person name="Teplitskaya E."/>
            <person name="Edwards J.R."/>
            <person name="Pampou S."/>
            <person name="Georghiou A."/>
            <person name="Chou I.-C."/>
            <person name="Iannuccilli W."/>
            <person name="Ulz M.E."/>
            <person name="Kim D.H."/>
            <person name="Geringer-Sameth A."/>
            <person name="Goldsberry C."/>
            <person name="Morozov P."/>
            <person name="Fischer S.G."/>
            <person name="Segal G."/>
            <person name="Qu X."/>
            <person name="Rzhetsky A."/>
            <person name="Zhang P."/>
            <person name="Cayanis E."/>
            <person name="De Jong P.J."/>
            <person name="Ju J."/>
            <person name="Kalachikov S."/>
            <person name="Shuman H.A."/>
            <person name="Russo J.J."/>
        </authorList>
    </citation>
    <scope>NUCLEOTIDE SEQUENCE [LARGE SCALE GENOMIC DNA]</scope>
    <source>
        <strain>Philadelphia 1 / ATCC 33152 / DSM 7513</strain>
    </source>
</reference>
<dbReference type="EC" id="2.3.1.117" evidence="1"/>
<dbReference type="EMBL" id="AE017354">
    <property type="protein sequence ID" value="AAU26975.1"/>
    <property type="molecule type" value="Genomic_DNA"/>
</dbReference>
<dbReference type="RefSeq" id="WP_010946623.1">
    <property type="nucleotide sequence ID" value="NC_002942.5"/>
</dbReference>
<dbReference type="RefSeq" id="YP_094922.1">
    <property type="nucleotide sequence ID" value="NC_002942.5"/>
</dbReference>
<dbReference type="PDB" id="6CKT">
    <property type="method" value="X-ray"/>
    <property type="resolution" value="1.80 A"/>
    <property type="chains" value="A=1-276"/>
</dbReference>
<dbReference type="PDBsum" id="6CKT"/>
<dbReference type="SMR" id="Q5ZX45"/>
<dbReference type="STRING" id="272624.lpg0888"/>
<dbReference type="PaxDb" id="272624-lpg0888"/>
<dbReference type="GeneID" id="57034876"/>
<dbReference type="KEGG" id="lpn:lpg0888"/>
<dbReference type="PATRIC" id="fig|272624.6.peg.919"/>
<dbReference type="eggNOG" id="COG2171">
    <property type="taxonomic scope" value="Bacteria"/>
</dbReference>
<dbReference type="HOGENOM" id="CLU_050859_0_1_6"/>
<dbReference type="OrthoDB" id="9775362at2"/>
<dbReference type="UniPathway" id="UPA00034">
    <property type="reaction ID" value="UER00019"/>
</dbReference>
<dbReference type="Proteomes" id="UP000000609">
    <property type="component" value="Chromosome"/>
</dbReference>
<dbReference type="GO" id="GO:0005737">
    <property type="term" value="C:cytoplasm"/>
    <property type="evidence" value="ECO:0007669"/>
    <property type="project" value="UniProtKB-SubCell"/>
</dbReference>
<dbReference type="GO" id="GO:0008666">
    <property type="term" value="F:2,3,4,5-tetrahydropyridine-2,6-dicarboxylate N-succinyltransferase activity"/>
    <property type="evidence" value="ECO:0007669"/>
    <property type="project" value="UniProtKB-UniRule"/>
</dbReference>
<dbReference type="GO" id="GO:0016779">
    <property type="term" value="F:nucleotidyltransferase activity"/>
    <property type="evidence" value="ECO:0007669"/>
    <property type="project" value="TreeGrafter"/>
</dbReference>
<dbReference type="GO" id="GO:0019877">
    <property type="term" value="P:diaminopimelate biosynthetic process"/>
    <property type="evidence" value="ECO:0007669"/>
    <property type="project" value="UniProtKB-UniRule"/>
</dbReference>
<dbReference type="GO" id="GO:0009089">
    <property type="term" value="P:lysine biosynthetic process via diaminopimelate"/>
    <property type="evidence" value="ECO:0007669"/>
    <property type="project" value="UniProtKB-UniRule"/>
</dbReference>
<dbReference type="CDD" id="cd03350">
    <property type="entry name" value="LbH_THP_succinylT"/>
    <property type="match status" value="1"/>
</dbReference>
<dbReference type="Gene3D" id="2.160.10.10">
    <property type="entry name" value="Hexapeptide repeat proteins"/>
    <property type="match status" value="1"/>
</dbReference>
<dbReference type="Gene3D" id="1.10.166.10">
    <property type="entry name" value="Tetrahydrodipicolinate-N-succinyltransferase, N-terminal domain"/>
    <property type="match status" value="1"/>
</dbReference>
<dbReference type="HAMAP" id="MF_00811">
    <property type="entry name" value="DapD"/>
    <property type="match status" value="1"/>
</dbReference>
<dbReference type="InterPro" id="IPR005664">
    <property type="entry name" value="DapD_Trfase_Hexpep_rpt_fam"/>
</dbReference>
<dbReference type="InterPro" id="IPR001451">
    <property type="entry name" value="Hexapep"/>
</dbReference>
<dbReference type="InterPro" id="IPR023180">
    <property type="entry name" value="THP_succinylTrfase_dom1"/>
</dbReference>
<dbReference type="InterPro" id="IPR037133">
    <property type="entry name" value="THP_succinylTrfase_N_sf"/>
</dbReference>
<dbReference type="InterPro" id="IPR011004">
    <property type="entry name" value="Trimer_LpxA-like_sf"/>
</dbReference>
<dbReference type="NCBIfam" id="TIGR00965">
    <property type="entry name" value="dapD"/>
    <property type="match status" value="1"/>
</dbReference>
<dbReference type="NCBIfam" id="NF008808">
    <property type="entry name" value="PRK11830.1"/>
    <property type="match status" value="1"/>
</dbReference>
<dbReference type="PANTHER" id="PTHR19136:SF52">
    <property type="entry name" value="2,3,4,5-TETRAHYDROPYRIDINE-2,6-DICARBOXYLATE N-SUCCINYLTRANSFERASE"/>
    <property type="match status" value="1"/>
</dbReference>
<dbReference type="PANTHER" id="PTHR19136">
    <property type="entry name" value="MOLYBDENUM COFACTOR GUANYLYLTRANSFERASE"/>
    <property type="match status" value="1"/>
</dbReference>
<dbReference type="Pfam" id="PF14602">
    <property type="entry name" value="Hexapep_2"/>
    <property type="match status" value="1"/>
</dbReference>
<dbReference type="Pfam" id="PF14805">
    <property type="entry name" value="THDPS_N_2"/>
    <property type="match status" value="1"/>
</dbReference>
<dbReference type="SUPFAM" id="SSF51161">
    <property type="entry name" value="Trimeric LpxA-like enzymes"/>
    <property type="match status" value="1"/>
</dbReference>
<feature type="chain" id="PRO_0000196945" description="2,3,4,5-tetrahydropyridine-2,6-dicarboxylate N-succinyltransferase">
    <location>
        <begin position="1"/>
        <end position="276"/>
    </location>
</feature>
<feature type="binding site" evidence="1">
    <location>
        <position position="104"/>
    </location>
    <ligand>
        <name>substrate</name>
    </ligand>
</feature>
<feature type="binding site" evidence="1">
    <location>
        <position position="141"/>
    </location>
    <ligand>
        <name>substrate</name>
    </ligand>
</feature>
<feature type="helix" evidence="2">
    <location>
        <begin position="1"/>
        <end position="13"/>
    </location>
</feature>
<feature type="helix" evidence="2">
    <location>
        <begin position="15"/>
        <end position="17"/>
    </location>
</feature>
<feature type="strand" evidence="2">
    <location>
        <begin position="20"/>
        <end position="22"/>
    </location>
</feature>
<feature type="helix" evidence="2">
    <location>
        <begin position="25"/>
        <end position="39"/>
    </location>
</feature>
<feature type="strand" evidence="2">
    <location>
        <begin position="45"/>
        <end position="49"/>
    </location>
</feature>
<feature type="strand" evidence="2">
    <location>
        <begin position="52"/>
        <end position="55"/>
    </location>
</feature>
<feature type="helix" evidence="2">
    <location>
        <begin position="57"/>
        <end position="69"/>
    </location>
</feature>
<feature type="strand" evidence="2">
    <location>
        <begin position="73"/>
        <end position="76"/>
    </location>
</feature>
<feature type="strand" evidence="2">
    <location>
        <begin position="78"/>
        <end position="86"/>
    </location>
</feature>
<feature type="strand" evidence="2">
    <location>
        <begin position="88"/>
        <end position="92"/>
    </location>
</feature>
<feature type="helix" evidence="2">
    <location>
        <begin position="95"/>
        <end position="101"/>
    </location>
</feature>
<feature type="strand" evidence="2">
    <location>
        <begin position="110"/>
        <end position="112"/>
    </location>
</feature>
<feature type="strand" evidence="2">
    <location>
        <begin position="214"/>
        <end position="216"/>
    </location>
</feature>
<feature type="turn" evidence="2">
    <location>
        <begin position="217"/>
        <end position="219"/>
    </location>
</feature>
<feature type="strand" evidence="2">
    <location>
        <begin position="225"/>
        <end position="227"/>
    </location>
</feature>
<feature type="strand" evidence="2">
    <location>
        <begin position="231"/>
        <end position="239"/>
    </location>
</feature>
<feature type="strand" evidence="2">
    <location>
        <begin position="246"/>
        <end position="255"/>
    </location>
</feature>
<feature type="helix" evidence="2">
    <location>
        <begin position="258"/>
        <end position="263"/>
    </location>
</feature>
<feature type="helix" evidence="2">
    <location>
        <begin position="266"/>
        <end position="270"/>
    </location>
</feature>
<protein>
    <recommendedName>
        <fullName evidence="1">2,3,4,5-tetrahydropyridine-2,6-dicarboxylate N-succinyltransferase</fullName>
        <ecNumber evidence="1">2.3.1.117</ecNumber>
    </recommendedName>
    <alternativeName>
        <fullName evidence="1">Tetrahydrodipicolinate N-succinyltransferase</fullName>
        <shortName evidence="1">THDP succinyltransferase</shortName>
        <shortName evidence="1">THP succinyltransferase</shortName>
        <shortName evidence="1">Tetrahydropicolinate succinylase</shortName>
    </alternativeName>
</protein>
<organism>
    <name type="scientific">Legionella pneumophila subsp. pneumophila (strain Philadelphia 1 / ATCC 33152 / DSM 7513)</name>
    <dbReference type="NCBI Taxonomy" id="272624"/>
    <lineage>
        <taxon>Bacteria</taxon>
        <taxon>Pseudomonadati</taxon>
        <taxon>Pseudomonadota</taxon>
        <taxon>Gammaproteobacteria</taxon>
        <taxon>Legionellales</taxon>
        <taxon>Legionellaceae</taxon>
        <taxon>Legionella</taxon>
    </lineage>
</organism>